<gene>
    <name evidence="1" type="primary">rimK</name>
    <name type="ordered locus">Ent638_1366</name>
</gene>
<sequence length="300" mass="32447">MKIAILSRDGTLYSCKRLLDAANKRGHVVEILDPLSCYMNISPAASSIHYKGRHLPHFDAVIPRIGSQMTFYGTAALRQFEMLGSYPLNESVAITRARDKLRSLQLLARQGIDLPMTGIAHSPDDTSDLIAMVGGAPLVVKLVEGTQGIGVVLAETRQAAESVIDAFRGLNAHILVQEYIEEAKGRDIRCLVVGNEVVAAIERQAKDGDFRSNLHRGGVARIADITEREREIAITAAQTLGLDIAGVDILRANRGPLVMEVNASPGLEGIEKTTGVDIAGKMISWIERHATPGYYLKTGG</sequence>
<evidence type="ECO:0000255" key="1">
    <source>
        <dbReference type="HAMAP-Rule" id="MF_01552"/>
    </source>
</evidence>
<accession>A4W8L7</accession>
<feature type="chain" id="PRO_1000068839" description="Probable alpha-L-glutamate ligase">
    <location>
        <begin position="1"/>
        <end position="300"/>
    </location>
</feature>
<feature type="domain" description="ATP-grasp" evidence="1">
    <location>
        <begin position="104"/>
        <end position="287"/>
    </location>
</feature>
<feature type="binding site" evidence="1">
    <location>
        <position position="141"/>
    </location>
    <ligand>
        <name>ATP</name>
        <dbReference type="ChEBI" id="CHEBI:30616"/>
    </ligand>
</feature>
<feature type="binding site" evidence="1">
    <location>
        <begin position="178"/>
        <end position="179"/>
    </location>
    <ligand>
        <name>ATP</name>
        <dbReference type="ChEBI" id="CHEBI:30616"/>
    </ligand>
</feature>
<feature type="binding site" evidence="1">
    <location>
        <position position="187"/>
    </location>
    <ligand>
        <name>ATP</name>
        <dbReference type="ChEBI" id="CHEBI:30616"/>
    </ligand>
</feature>
<feature type="binding site" evidence="1">
    <location>
        <begin position="211"/>
        <end position="213"/>
    </location>
    <ligand>
        <name>ATP</name>
        <dbReference type="ChEBI" id="CHEBI:30616"/>
    </ligand>
</feature>
<feature type="binding site" evidence="1">
    <location>
        <position position="248"/>
    </location>
    <ligand>
        <name>Mg(2+)</name>
        <dbReference type="ChEBI" id="CHEBI:18420"/>
        <label>1</label>
    </ligand>
</feature>
<feature type="binding site" evidence="1">
    <location>
        <position position="248"/>
    </location>
    <ligand>
        <name>Mn(2+)</name>
        <dbReference type="ChEBI" id="CHEBI:29035"/>
        <label>1</label>
    </ligand>
</feature>
<feature type="binding site" evidence="1">
    <location>
        <position position="260"/>
    </location>
    <ligand>
        <name>Mg(2+)</name>
        <dbReference type="ChEBI" id="CHEBI:18420"/>
        <label>1</label>
    </ligand>
</feature>
<feature type="binding site" evidence="1">
    <location>
        <position position="260"/>
    </location>
    <ligand>
        <name>Mg(2+)</name>
        <dbReference type="ChEBI" id="CHEBI:18420"/>
        <label>2</label>
    </ligand>
</feature>
<feature type="binding site" evidence="1">
    <location>
        <position position="260"/>
    </location>
    <ligand>
        <name>Mn(2+)</name>
        <dbReference type="ChEBI" id="CHEBI:29035"/>
        <label>1</label>
    </ligand>
</feature>
<feature type="binding site" evidence="1">
    <location>
        <position position="260"/>
    </location>
    <ligand>
        <name>Mn(2+)</name>
        <dbReference type="ChEBI" id="CHEBI:29035"/>
        <label>2</label>
    </ligand>
</feature>
<feature type="binding site" evidence="1">
    <location>
        <position position="262"/>
    </location>
    <ligand>
        <name>Mg(2+)</name>
        <dbReference type="ChEBI" id="CHEBI:18420"/>
        <label>2</label>
    </ligand>
</feature>
<feature type="binding site" evidence="1">
    <location>
        <position position="262"/>
    </location>
    <ligand>
        <name>Mn(2+)</name>
        <dbReference type="ChEBI" id="CHEBI:29035"/>
        <label>2</label>
    </ligand>
</feature>
<reference key="1">
    <citation type="journal article" date="2010" name="PLoS Genet.">
        <title>Genome sequence of the plant growth promoting endophytic bacterium Enterobacter sp. 638.</title>
        <authorList>
            <person name="Taghavi S."/>
            <person name="van der Lelie D."/>
            <person name="Hoffman A."/>
            <person name="Zhang Y.B."/>
            <person name="Walla M.D."/>
            <person name="Vangronsveld J."/>
            <person name="Newman L."/>
            <person name="Monchy S."/>
        </authorList>
    </citation>
    <scope>NUCLEOTIDE SEQUENCE [LARGE SCALE GENOMIC DNA]</scope>
    <source>
        <strain>638</strain>
    </source>
</reference>
<proteinExistence type="inferred from homology"/>
<keyword id="KW-0067">ATP-binding</keyword>
<keyword id="KW-0436">Ligase</keyword>
<keyword id="KW-0460">Magnesium</keyword>
<keyword id="KW-0464">Manganese</keyword>
<keyword id="KW-0479">Metal-binding</keyword>
<keyword id="KW-0547">Nucleotide-binding</keyword>
<keyword id="KW-0648">Protein biosynthesis</keyword>
<protein>
    <recommendedName>
        <fullName evidence="1">Probable alpha-L-glutamate ligase</fullName>
        <ecNumber evidence="1">6.3.2.-</ecNumber>
    </recommendedName>
</protein>
<organism>
    <name type="scientific">Enterobacter sp. (strain 638)</name>
    <dbReference type="NCBI Taxonomy" id="399742"/>
    <lineage>
        <taxon>Bacteria</taxon>
        <taxon>Pseudomonadati</taxon>
        <taxon>Pseudomonadota</taxon>
        <taxon>Gammaproteobacteria</taxon>
        <taxon>Enterobacterales</taxon>
        <taxon>Enterobacteriaceae</taxon>
        <taxon>Enterobacter</taxon>
    </lineage>
</organism>
<name>RIMK_ENT38</name>
<dbReference type="EC" id="6.3.2.-" evidence="1"/>
<dbReference type="EMBL" id="CP000653">
    <property type="protein sequence ID" value="ABP60047.1"/>
    <property type="molecule type" value="Genomic_DNA"/>
</dbReference>
<dbReference type="RefSeq" id="WP_012016766.1">
    <property type="nucleotide sequence ID" value="NC_009436.1"/>
</dbReference>
<dbReference type="SMR" id="A4W8L7"/>
<dbReference type="STRING" id="399742.Ent638_1366"/>
<dbReference type="KEGG" id="ent:Ent638_1366"/>
<dbReference type="eggNOG" id="COG0189">
    <property type="taxonomic scope" value="Bacteria"/>
</dbReference>
<dbReference type="HOGENOM" id="CLU_054353_0_1_6"/>
<dbReference type="OrthoDB" id="3865600at2"/>
<dbReference type="Proteomes" id="UP000000230">
    <property type="component" value="Chromosome"/>
</dbReference>
<dbReference type="GO" id="GO:0005737">
    <property type="term" value="C:cytoplasm"/>
    <property type="evidence" value="ECO:0007669"/>
    <property type="project" value="TreeGrafter"/>
</dbReference>
<dbReference type="GO" id="GO:0005524">
    <property type="term" value="F:ATP binding"/>
    <property type="evidence" value="ECO:0007669"/>
    <property type="project" value="UniProtKB-UniRule"/>
</dbReference>
<dbReference type="GO" id="GO:0046872">
    <property type="term" value="F:metal ion binding"/>
    <property type="evidence" value="ECO:0007669"/>
    <property type="project" value="UniProtKB-KW"/>
</dbReference>
<dbReference type="GO" id="GO:0018169">
    <property type="term" value="F:ribosomal S6-glutamic acid ligase activity"/>
    <property type="evidence" value="ECO:0007669"/>
    <property type="project" value="TreeGrafter"/>
</dbReference>
<dbReference type="GO" id="GO:0036211">
    <property type="term" value="P:protein modification process"/>
    <property type="evidence" value="ECO:0007669"/>
    <property type="project" value="InterPro"/>
</dbReference>
<dbReference type="GO" id="GO:0009432">
    <property type="term" value="P:SOS response"/>
    <property type="evidence" value="ECO:0007669"/>
    <property type="project" value="TreeGrafter"/>
</dbReference>
<dbReference type="GO" id="GO:0006412">
    <property type="term" value="P:translation"/>
    <property type="evidence" value="ECO:0007669"/>
    <property type="project" value="UniProtKB-KW"/>
</dbReference>
<dbReference type="FunFam" id="3.40.50.20:FF:000004">
    <property type="entry name" value="Probable alpha-L-glutamate ligase"/>
    <property type="match status" value="1"/>
</dbReference>
<dbReference type="FunFam" id="3.30.1490.20:FF:000005">
    <property type="entry name" value="Probable alpha-L-glutamate ligase 1"/>
    <property type="match status" value="1"/>
</dbReference>
<dbReference type="FunFam" id="3.30.470.20:FF:000016">
    <property type="entry name" value="Ribosomal protein S6--L-glutamate ligase"/>
    <property type="match status" value="1"/>
</dbReference>
<dbReference type="Gene3D" id="3.40.50.20">
    <property type="match status" value="1"/>
</dbReference>
<dbReference type="Gene3D" id="3.30.1490.20">
    <property type="entry name" value="ATP-grasp fold, A domain"/>
    <property type="match status" value="1"/>
</dbReference>
<dbReference type="Gene3D" id="3.30.470.20">
    <property type="entry name" value="ATP-grasp fold, B domain"/>
    <property type="match status" value="1"/>
</dbReference>
<dbReference type="HAMAP" id="MF_01552">
    <property type="entry name" value="RimK"/>
    <property type="match status" value="1"/>
</dbReference>
<dbReference type="InterPro" id="IPR011761">
    <property type="entry name" value="ATP-grasp"/>
</dbReference>
<dbReference type="InterPro" id="IPR013651">
    <property type="entry name" value="ATP-grasp_RimK-type"/>
</dbReference>
<dbReference type="InterPro" id="IPR013815">
    <property type="entry name" value="ATP_grasp_subdomain_1"/>
</dbReference>
<dbReference type="InterPro" id="IPR023533">
    <property type="entry name" value="RimK"/>
</dbReference>
<dbReference type="InterPro" id="IPR041107">
    <property type="entry name" value="Rimk_N"/>
</dbReference>
<dbReference type="InterPro" id="IPR004666">
    <property type="entry name" value="Rp_bS6_RimK/Lys_biosynth_LsyX"/>
</dbReference>
<dbReference type="NCBIfam" id="NF007764">
    <property type="entry name" value="PRK10446.1"/>
    <property type="match status" value="1"/>
</dbReference>
<dbReference type="NCBIfam" id="TIGR00768">
    <property type="entry name" value="rimK_fam"/>
    <property type="match status" value="1"/>
</dbReference>
<dbReference type="PANTHER" id="PTHR21621:SF7">
    <property type="entry name" value="RIBOSOMAL PROTEIN BS6--L-GLUTAMATE LIGASE"/>
    <property type="match status" value="1"/>
</dbReference>
<dbReference type="PANTHER" id="PTHR21621">
    <property type="entry name" value="RIBOSOMAL PROTEIN S6 MODIFICATION PROTEIN"/>
    <property type="match status" value="1"/>
</dbReference>
<dbReference type="Pfam" id="PF08443">
    <property type="entry name" value="RimK"/>
    <property type="match status" value="1"/>
</dbReference>
<dbReference type="Pfam" id="PF18030">
    <property type="entry name" value="Rimk_N"/>
    <property type="match status" value="1"/>
</dbReference>
<dbReference type="SUPFAM" id="SSF56059">
    <property type="entry name" value="Glutathione synthetase ATP-binding domain-like"/>
    <property type="match status" value="1"/>
</dbReference>
<dbReference type="PROSITE" id="PS50975">
    <property type="entry name" value="ATP_GRASP"/>
    <property type="match status" value="1"/>
</dbReference>
<comment type="cofactor">
    <cofactor evidence="1">
        <name>Mg(2+)</name>
        <dbReference type="ChEBI" id="CHEBI:18420"/>
    </cofactor>
    <cofactor evidence="1">
        <name>Mn(2+)</name>
        <dbReference type="ChEBI" id="CHEBI:29035"/>
    </cofactor>
    <text evidence="1">Binds 2 magnesium or manganese ions per subunit.</text>
</comment>
<comment type="similarity">
    <text evidence="1">Belongs to the RimK family.</text>
</comment>